<name>UVRC_ERWT9</name>
<reference key="1">
    <citation type="journal article" date="2008" name="Environ. Microbiol.">
        <title>The genome of Erwinia tasmaniensis strain Et1/99, a non-pathogenic bacterium in the genus Erwinia.</title>
        <authorList>
            <person name="Kube M."/>
            <person name="Migdoll A.M."/>
            <person name="Mueller I."/>
            <person name="Kuhl H."/>
            <person name="Beck A."/>
            <person name="Reinhardt R."/>
            <person name="Geider K."/>
        </authorList>
    </citation>
    <scope>NUCLEOTIDE SEQUENCE [LARGE SCALE GENOMIC DNA]</scope>
    <source>
        <strain>DSM 17950 / CFBP 7177 / CIP 109463 / NCPPB 4357 / Et1/99</strain>
    </source>
</reference>
<organism>
    <name type="scientific">Erwinia tasmaniensis (strain DSM 17950 / CFBP 7177 / CIP 109463 / NCPPB 4357 / Et1/99)</name>
    <dbReference type="NCBI Taxonomy" id="465817"/>
    <lineage>
        <taxon>Bacteria</taxon>
        <taxon>Pseudomonadati</taxon>
        <taxon>Pseudomonadota</taxon>
        <taxon>Gammaproteobacteria</taxon>
        <taxon>Enterobacterales</taxon>
        <taxon>Erwiniaceae</taxon>
        <taxon>Erwinia</taxon>
    </lineage>
</organism>
<sequence length="610" mass="68108">MSNVFDSKSFLKTVTSQPGVYRMYDAGGTVIYVGKAKDLKKRLSSYFRGNLGSRKTEALVALIEQIDVTVTHTETEALLLEHNYIKLYQPRYNVLLRDDKSYPYIFLSADHHPRLASHRGAKHAKGEYFGPFPNGYAVRETLSLLQKIFPVRQCENSVYRNRSRPCLQYQIGRCLGPCVEGLVTEEEYARQIDYVRLFLSGKDDQVLNQLVARMEQASGDLRFEEAGRLRDQIQAVRRVTEKQFVSNQGDDMDVIGVSFDSGMACLHVLFIRQGKVLGSRSYFPKVPGGTELAEVVQTFVGQFYLQGSQARTLPSDILIDFTLPEKDLLAASLTALSGRRVSIQSKPRGDRARYLKLARTNAATALITRLAQHSTIHQRLAALAQTLKLPAIGRMECFDISHTMGEQTVASCVVFDANGPLRSEYRRYNISGITPGDDYAAMNQVLRRRYGKAIEESKIPDVIVIDGGKGQLAQAKEVFAQLDVTWDKSHPLLLGVAKGTDRKAGLETLFLEPEGEGFSLPPDSPALHVIQHIRDDSHNHAITGHRNKRAKVKNTSALETIEGIGPKRRQMLLKYMGGLQPLINASKEEIARVPGISTALAEKIFYALKH</sequence>
<comment type="function">
    <text evidence="1">The UvrABC repair system catalyzes the recognition and processing of DNA lesions. UvrC both incises the 5' and 3' sides of the lesion. The N-terminal half is responsible for the 3' incision and the C-terminal half is responsible for the 5' incision.</text>
</comment>
<comment type="subunit">
    <text evidence="1">Interacts with UvrB in an incision complex.</text>
</comment>
<comment type="subcellular location">
    <subcellularLocation>
        <location evidence="1">Cytoplasm</location>
    </subcellularLocation>
</comment>
<comment type="similarity">
    <text evidence="1">Belongs to the UvrC family.</text>
</comment>
<feature type="chain" id="PRO_1000099480" description="UvrABC system protein C">
    <location>
        <begin position="1"/>
        <end position="610"/>
    </location>
</feature>
<feature type="domain" description="GIY-YIG" evidence="1">
    <location>
        <begin position="16"/>
        <end position="94"/>
    </location>
</feature>
<feature type="domain" description="UVR" evidence="1">
    <location>
        <begin position="204"/>
        <end position="239"/>
    </location>
</feature>
<protein>
    <recommendedName>
        <fullName evidence="1">UvrABC system protein C</fullName>
        <shortName evidence="1">Protein UvrC</shortName>
    </recommendedName>
    <alternativeName>
        <fullName evidence="1">Excinuclease ABC subunit C</fullName>
    </alternativeName>
</protein>
<dbReference type="EMBL" id="CU468135">
    <property type="protein sequence ID" value="CAO97123.1"/>
    <property type="molecule type" value="Genomic_DNA"/>
</dbReference>
<dbReference type="RefSeq" id="WP_012441794.1">
    <property type="nucleotide sequence ID" value="NC_010694.1"/>
</dbReference>
<dbReference type="SMR" id="B2VIA0"/>
<dbReference type="STRING" id="465817.ETA_20770"/>
<dbReference type="KEGG" id="eta:ETA_20770"/>
<dbReference type="eggNOG" id="COG0322">
    <property type="taxonomic scope" value="Bacteria"/>
</dbReference>
<dbReference type="HOGENOM" id="CLU_014841_3_0_6"/>
<dbReference type="OrthoDB" id="9804933at2"/>
<dbReference type="Proteomes" id="UP000001726">
    <property type="component" value="Chromosome"/>
</dbReference>
<dbReference type="GO" id="GO:0005737">
    <property type="term" value="C:cytoplasm"/>
    <property type="evidence" value="ECO:0007669"/>
    <property type="project" value="UniProtKB-SubCell"/>
</dbReference>
<dbReference type="GO" id="GO:0009380">
    <property type="term" value="C:excinuclease repair complex"/>
    <property type="evidence" value="ECO:0007669"/>
    <property type="project" value="InterPro"/>
</dbReference>
<dbReference type="GO" id="GO:0003677">
    <property type="term" value="F:DNA binding"/>
    <property type="evidence" value="ECO:0007669"/>
    <property type="project" value="UniProtKB-UniRule"/>
</dbReference>
<dbReference type="GO" id="GO:0009381">
    <property type="term" value="F:excinuclease ABC activity"/>
    <property type="evidence" value="ECO:0007669"/>
    <property type="project" value="UniProtKB-UniRule"/>
</dbReference>
<dbReference type="GO" id="GO:0006289">
    <property type="term" value="P:nucleotide-excision repair"/>
    <property type="evidence" value="ECO:0007669"/>
    <property type="project" value="UniProtKB-UniRule"/>
</dbReference>
<dbReference type="GO" id="GO:0009432">
    <property type="term" value="P:SOS response"/>
    <property type="evidence" value="ECO:0007669"/>
    <property type="project" value="UniProtKB-UniRule"/>
</dbReference>
<dbReference type="CDD" id="cd10434">
    <property type="entry name" value="GIY-YIG_UvrC_Cho"/>
    <property type="match status" value="1"/>
</dbReference>
<dbReference type="FunFam" id="1.10.150.20:FF:000005">
    <property type="entry name" value="UvrABC system protein C"/>
    <property type="match status" value="1"/>
</dbReference>
<dbReference type="FunFam" id="3.30.420.340:FF:000001">
    <property type="entry name" value="UvrABC system protein C"/>
    <property type="match status" value="1"/>
</dbReference>
<dbReference type="FunFam" id="3.40.1440.10:FF:000001">
    <property type="entry name" value="UvrABC system protein C"/>
    <property type="match status" value="1"/>
</dbReference>
<dbReference type="FunFam" id="4.10.860.10:FF:000002">
    <property type="entry name" value="UvrABC system protein C"/>
    <property type="match status" value="1"/>
</dbReference>
<dbReference type="Gene3D" id="1.10.150.20">
    <property type="entry name" value="5' to 3' exonuclease, C-terminal subdomain"/>
    <property type="match status" value="1"/>
</dbReference>
<dbReference type="Gene3D" id="3.40.1440.10">
    <property type="entry name" value="GIY-YIG endonuclease"/>
    <property type="match status" value="1"/>
</dbReference>
<dbReference type="Gene3D" id="4.10.860.10">
    <property type="entry name" value="UVR domain"/>
    <property type="match status" value="1"/>
</dbReference>
<dbReference type="Gene3D" id="3.30.420.340">
    <property type="entry name" value="UvrC, RNAse H endonuclease domain"/>
    <property type="match status" value="1"/>
</dbReference>
<dbReference type="HAMAP" id="MF_00203">
    <property type="entry name" value="UvrC"/>
    <property type="match status" value="1"/>
</dbReference>
<dbReference type="InterPro" id="IPR000305">
    <property type="entry name" value="GIY-YIG_endonuc"/>
</dbReference>
<dbReference type="InterPro" id="IPR035901">
    <property type="entry name" value="GIY-YIG_endonuc_sf"/>
</dbReference>
<dbReference type="InterPro" id="IPR047296">
    <property type="entry name" value="GIY-YIG_UvrC_Cho"/>
</dbReference>
<dbReference type="InterPro" id="IPR003583">
    <property type="entry name" value="Hlx-hairpin-Hlx_DNA-bd_motif"/>
</dbReference>
<dbReference type="InterPro" id="IPR010994">
    <property type="entry name" value="RuvA_2-like"/>
</dbReference>
<dbReference type="InterPro" id="IPR001943">
    <property type="entry name" value="UVR_dom"/>
</dbReference>
<dbReference type="InterPro" id="IPR036876">
    <property type="entry name" value="UVR_dom_sf"/>
</dbReference>
<dbReference type="InterPro" id="IPR050066">
    <property type="entry name" value="UvrABC_protein_C"/>
</dbReference>
<dbReference type="InterPro" id="IPR004791">
    <property type="entry name" value="UvrC"/>
</dbReference>
<dbReference type="InterPro" id="IPR001162">
    <property type="entry name" value="UvrC_RNase_H_dom"/>
</dbReference>
<dbReference type="InterPro" id="IPR038476">
    <property type="entry name" value="UvrC_RNase_H_dom_sf"/>
</dbReference>
<dbReference type="NCBIfam" id="NF001824">
    <property type="entry name" value="PRK00558.1-5"/>
    <property type="match status" value="1"/>
</dbReference>
<dbReference type="NCBIfam" id="TIGR00194">
    <property type="entry name" value="uvrC"/>
    <property type="match status" value="1"/>
</dbReference>
<dbReference type="PANTHER" id="PTHR30562:SF1">
    <property type="entry name" value="UVRABC SYSTEM PROTEIN C"/>
    <property type="match status" value="1"/>
</dbReference>
<dbReference type="PANTHER" id="PTHR30562">
    <property type="entry name" value="UVRC/OXIDOREDUCTASE"/>
    <property type="match status" value="1"/>
</dbReference>
<dbReference type="Pfam" id="PF01541">
    <property type="entry name" value="GIY-YIG"/>
    <property type="match status" value="1"/>
</dbReference>
<dbReference type="Pfam" id="PF14520">
    <property type="entry name" value="HHH_5"/>
    <property type="match status" value="1"/>
</dbReference>
<dbReference type="Pfam" id="PF02151">
    <property type="entry name" value="UVR"/>
    <property type="match status" value="1"/>
</dbReference>
<dbReference type="Pfam" id="PF22920">
    <property type="entry name" value="UvrC_RNaseH"/>
    <property type="match status" value="1"/>
</dbReference>
<dbReference type="Pfam" id="PF08459">
    <property type="entry name" value="UvrC_RNaseH_dom"/>
    <property type="match status" value="1"/>
</dbReference>
<dbReference type="SMART" id="SM00465">
    <property type="entry name" value="GIYc"/>
    <property type="match status" value="1"/>
</dbReference>
<dbReference type="SMART" id="SM00278">
    <property type="entry name" value="HhH1"/>
    <property type="match status" value="2"/>
</dbReference>
<dbReference type="SUPFAM" id="SSF46600">
    <property type="entry name" value="C-terminal UvrC-binding domain of UvrB"/>
    <property type="match status" value="1"/>
</dbReference>
<dbReference type="SUPFAM" id="SSF82771">
    <property type="entry name" value="GIY-YIG endonuclease"/>
    <property type="match status" value="1"/>
</dbReference>
<dbReference type="SUPFAM" id="SSF47781">
    <property type="entry name" value="RuvA domain 2-like"/>
    <property type="match status" value="1"/>
</dbReference>
<dbReference type="PROSITE" id="PS50164">
    <property type="entry name" value="GIY_YIG"/>
    <property type="match status" value="1"/>
</dbReference>
<dbReference type="PROSITE" id="PS50151">
    <property type="entry name" value="UVR"/>
    <property type="match status" value="1"/>
</dbReference>
<dbReference type="PROSITE" id="PS50165">
    <property type="entry name" value="UVRC"/>
    <property type="match status" value="1"/>
</dbReference>
<keyword id="KW-0963">Cytoplasm</keyword>
<keyword id="KW-0227">DNA damage</keyword>
<keyword id="KW-0228">DNA excision</keyword>
<keyword id="KW-0234">DNA repair</keyword>
<keyword id="KW-0267">Excision nuclease</keyword>
<keyword id="KW-1185">Reference proteome</keyword>
<keyword id="KW-0742">SOS response</keyword>
<proteinExistence type="inferred from homology"/>
<accession>B2VIA0</accession>
<evidence type="ECO:0000255" key="1">
    <source>
        <dbReference type="HAMAP-Rule" id="MF_00203"/>
    </source>
</evidence>
<gene>
    <name evidence="1" type="primary">uvrC</name>
    <name type="ordered locus">ETA_20770</name>
</gene>